<keyword id="KW-0009">Actin-binding</keyword>
<keyword id="KW-0175">Coiled coil</keyword>
<keyword id="KW-0479">Metal-binding</keyword>
<keyword id="KW-1185">Reference proteome</keyword>
<keyword id="KW-0862">Zinc</keyword>
<keyword id="KW-0863">Zinc-finger</keyword>
<proteinExistence type="evidence at protein level"/>
<reference key="1">
    <citation type="submission" date="2004-08" db="EMBL/GenBank/DDBJ databases">
        <title>The Diaphanous-related formin dDia3 regulates actin cytoskeleton-plasma membrane interaction in Dictyostelium discoideum.</title>
        <authorList>
            <person name="Nagendran R."/>
            <person name="Schleicher M."/>
            <person name="Faix J."/>
        </authorList>
    </citation>
    <scope>NUCLEOTIDE SEQUENCE [MRNA]</scope>
    <source>
        <strain>AX2</strain>
    </source>
</reference>
<reference key="2">
    <citation type="journal article" date="2005" name="Nature">
        <title>The genome of the social amoeba Dictyostelium discoideum.</title>
        <authorList>
            <person name="Eichinger L."/>
            <person name="Pachebat J.A."/>
            <person name="Gloeckner G."/>
            <person name="Rajandream M.A."/>
            <person name="Sucgang R."/>
            <person name="Berriman M."/>
            <person name="Song J."/>
            <person name="Olsen R."/>
            <person name="Szafranski K."/>
            <person name="Xu Q."/>
            <person name="Tunggal B."/>
            <person name="Kummerfeld S."/>
            <person name="Madera M."/>
            <person name="Konfortov B.A."/>
            <person name="Rivero F."/>
            <person name="Bankier A.T."/>
            <person name="Lehmann R."/>
            <person name="Hamlin N."/>
            <person name="Davies R."/>
            <person name="Gaudet P."/>
            <person name="Fey P."/>
            <person name="Pilcher K."/>
            <person name="Chen G."/>
            <person name="Saunders D."/>
            <person name="Sodergren E.J."/>
            <person name="Davis P."/>
            <person name="Kerhornou A."/>
            <person name="Nie X."/>
            <person name="Hall N."/>
            <person name="Anjard C."/>
            <person name="Hemphill L."/>
            <person name="Bason N."/>
            <person name="Farbrother P."/>
            <person name="Desany B."/>
            <person name="Just E."/>
            <person name="Morio T."/>
            <person name="Rost R."/>
            <person name="Churcher C.M."/>
            <person name="Cooper J."/>
            <person name="Haydock S."/>
            <person name="van Driessche N."/>
            <person name="Cronin A."/>
            <person name="Goodhead I."/>
            <person name="Muzny D.M."/>
            <person name="Mourier T."/>
            <person name="Pain A."/>
            <person name="Lu M."/>
            <person name="Harper D."/>
            <person name="Lindsay R."/>
            <person name="Hauser H."/>
            <person name="James K.D."/>
            <person name="Quiles M."/>
            <person name="Madan Babu M."/>
            <person name="Saito T."/>
            <person name="Buchrieser C."/>
            <person name="Wardroper A."/>
            <person name="Felder M."/>
            <person name="Thangavelu M."/>
            <person name="Johnson D."/>
            <person name="Knights A."/>
            <person name="Loulseged H."/>
            <person name="Mungall K.L."/>
            <person name="Oliver K."/>
            <person name="Price C."/>
            <person name="Quail M.A."/>
            <person name="Urushihara H."/>
            <person name="Hernandez J."/>
            <person name="Rabbinowitsch E."/>
            <person name="Steffen D."/>
            <person name="Sanders M."/>
            <person name="Ma J."/>
            <person name="Kohara Y."/>
            <person name="Sharp S."/>
            <person name="Simmonds M.N."/>
            <person name="Spiegler S."/>
            <person name="Tivey A."/>
            <person name="Sugano S."/>
            <person name="White B."/>
            <person name="Walker D."/>
            <person name="Woodward J.R."/>
            <person name="Winckler T."/>
            <person name="Tanaka Y."/>
            <person name="Shaulsky G."/>
            <person name="Schleicher M."/>
            <person name="Weinstock G.M."/>
            <person name="Rosenthal A."/>
            <person name="Cox E.C."/>
            <person name="Chisholm R.L."/>
            <person name="Gibbs R.A."/>
            <person name="Loomis W.F."/>
            <person name="Platzer M."/>
            <person name="Kay R.R."/>
            <person name="Williams J.G."/>
            <person name="Dear P.H."/>
            <person name="Noegel A.A."/>
            <person name="Barrell B.G."/>
            <person name="Kuspa A."/>
        </authorList>
    </citation>
    <scope>NUCLEOTIDE SEQUENCE [LARGE SCALE GENOMIC DNA]</scope>
    <source>
        <strain>AX4</strain>
    </source>
</reference>
<reference key="3">
    <citation type="journal article" date="2004" name="Protoplasma">
        <title>Evolutionarily conserved modules in actin nucleation: lessons from Dictyostelium discoideum and plants. Review article.</title>
        <authorList>
            <person name="Cvrckova F."/>
            <person name="Rivero F."/>
            <person name="Bavlnka B."/>
        </authorList>
    </citation>
    <scope>NOMENCLATURE</scope>
</reference>
<reference key="4">
    <citation type="journal article" date="2005" name="BMC Genomics">
        <title>A comparative sequence analysis reveals a common GBD/FH3-FH1-FH2-DAD architecture in formins from Dictyostelium, fungi and metazoa.</title>
        <authorList>
            <person name="Rivero F."/>
            <person name="Muramoto T."/>
            <person name="Meyer A.-K."/>
            <person name="Urushihara H."/>
            <person name="Uyeda T.Q.P."/>
            <person name="Kitayama C."/>
        </authorList>
    </citation>
    <scope>DEVELOPMENTAL STAGE</scope>
</reference>
<reference key="5">
    <citation type="journal article" date="2006" name="Eur. J. Cell Biol.">
        <title>Rho GTPase signaling in Dictyostelium discoideum: insights from the genome.</title>
        <authorList>
            <person name="Vlahou G."/>
            <person name="Rivero F."/>
        </authorList>
    </citation>
    <scope>INTERACTION WITH RHO GTPASE</scope>
</reference>
<sequence>MDNHSSSSNPSSLSSSSSSSSSSSSFLSDHVKKEEQNGLDTIKEEIENKIENEEEEEKIEEKPIEKVEEEKIIVQKEEEEKIEEEPIEKEEEKKVEEEKFEQDNINTTVEAKTLETSTEPIATEVVDEKSITSNNENLEEQQKEDVISIPPPQQEQQEQQEQQEKQKEETKPSIREEVKEKIKGKLSEIKEEIKDIKEEIKHVIREEVTEPIIVVENNNSPPPPPPPPSITVQSSSPVSSQISSPVSSPVSSPKPSVTFNEDGRKRKEGGITASISSEDIMALSSSTSTNNKGIPKENKRTASTILRSKSSPNPGANNPNHNKDGNNSSSSSSSNNNSDNNNNSDNNSNNNNINNNNSSSNNLNYDSSDIDTEAIPKFYHDFKIHRGTSSCVYCGENTRLWSTSYKCFFCGVVCHKKCLDSMNTIPCSSAIHNIKGKNRSQTISGYAPPNSLALQAPPYISVAKPSSITNSSSKSTPSLLSAPPSQSNSNNSSPNISSKSNPNSPITTSATTTTTTATISSLSPTSISSPPIASEQPPSPLLQQQQQQQQQQQQQQQQQQQQQQQQQQISTTQLQDLNNTSEKPDDDMINLMFDTLMVDLDLNLPASKLSTTQKWLLLEQKFKLKKDELLPEYFINALKEQPSKSIFQSLVVILRTNVTKNWMCSFVQLNGVEILFEILSKSKRKDYKDDCLSCIGKVMSNPIGLNSVAQLPMAPKTITKVLRSKQYCIKSKAMAIELLTVMLLDKYVPGGCSLVLKALTKTKEKKRFSFFVRFIKDNESLELKTKALCFINVLIFEMEDMNVRVNIRSEFLRLGLYTYLREIKKTITHEKTLFTQIEIFEEMMNEDTQELDLRLEDLKRQLGIDIDDVDQVFKALKNTTSKSGLNRQLLNILQNLLVIKACDPTDGVKYFILCDTLVKQISLHKGGFEDPSNFDFRGLMVGLESATAEVTLNRKLGELEKQNIDKAMKIQEQDINIKSLLDLLKQLKDGGTAPDASMIKKIEEMIKQMEPPPPPISVKSPDDPNNAAPIVVAPIPPPPPPISGAPPPPPPPPPPMKGGAGPPPPPPPPGKLGAKKPPAGVQCRPPPKVPKPSHPLKAYQWVKLAPVKVNDSLFDKLGPMNDINLPWNQIEEEFAAKVIVREKKAIVKPKGPTQVIDPKLGQNISIFLSQFKGVEPKQLITYIQSMDESKMSRDQVKQISKLLPSREDLAALKEFLQAEDRSKLSIADQYCIDIGAFPFASEKISMFLLKSELKSRLDEVKPQIAAVSVACDEVYKSKKLIRIIEIILVLGNFINYGTPRGDISGYKLDSLIKLSDTKSSDLSSNLINTFVKYCQEKEPNLLTFADELPSLTTARKTIWSGVVADVSSIGRDVHSVKQIVETLQKSNEPFNQSIIDFLATASTEVEKLRKLLESTQENFKKLCKYFAEEEGKSQPEEFFDIFGRFITLFENATTQLQQQKEEQLKEEKRLQQKQQRQERAVRKLTTSNESASASPNHAKSTDDKSDEDDDIVNDLLMAVRDGDAFRQAKGRRRTTHQIATSKMISNNLDPSKILPTSPNKN</sequence>
<evidence type="ECO:0000250" key="1"/>
<evidence type="ECO:0000255" key="2"/>
<evidence type="ECO:0000255" key="3">
    <source>
        <dbReference type="PROSITE-ProRule" id="PRU00226"/>
    </source>
</evidence>
<evidence type="ECO:0000255" key="4">
    <source>
        <dbReference type="PROSITE-ProRule" id="PRU00579"/>
    </source>
</evidence>
<evidence type="ECO:0000255" key="5">
    <source>
        <dbReference type="PROSITE-ProRule" id="PRU00774"/>
    </source>
</evidence>
<evidence type="ECO:0000256" key="6">
    <source>
        <dbReference type="SAM" id="MobiDB-lite"/>
    </source>
</evidence>
<evidence type="ECO:0000269" key="7">
    <source>
    </source>
</evidence>
<evidence type="ECO:0000269" key="8">
    <source>
    </source>
</evidence>
<evidence type="ECO:0000305" key="9"/>
<comment type="function">
    <text evidence="1">Formins play an important role in the nucleation of actin and the formation of linear actin filaments.</text>
</comment>
<comment type="subunit">
    <text evidence="8">Interacts (via GBD/FH3 domain) with activated Rho-GTPases.</text>
</comment>
<comment type="developmental stage">
    <text evidence="7">Expression decreases after the onset of development.</text>
</comment>
<comment type="domain">
    <text evidence="1">The DAD domain regulates activation via by an autoinhibitory interaction with the GBD/FH3 domain. This autoinhibition is released upon competitive binding of an activated GTPase. The release of DAD allows the FH2 domain to then nucleate and elongate nonbranched actin filaments (By similarity).</text>
</comment>
<comment type="similarity">
    <text evidence="9">Belongs to the formin homology family. Diaphanous subfamily.</text>
</comment>
<gene>
    <name type="primary">forE</name>
    <name type="synonym">dia3</name>
    <name type="synonym">drf3</name>
    <name type="ORF">DDB_G0269626</name>
</gene>
<protein>
    <recommendedName>
        <fullName>Formin-E</fullName>
    </recommendedName>
    <alternativeName>
        <fullName>Diaphanous-related formin dia3</fullName>
    </alternativeName>
</protein>
<accession>Q5TJ57</accession>
<accession>Q55DK4</accession>
<dbReference type="EMBL" id="AJ812236">
    <property type="protein sequence ID" value="CAH23233.1"/>
    <property type="molecule type" value="mRNA"/>
</dbReference>
<dbReference type="EMBL" id="AAFI02000005">
    <property type="protein sequence ID" value="EAL72163.1"/>
    <property type="molecule type" value="Genomic_DNA"/>
</dbReference>
<dbReference type="RefSeq" id="XP_646127.1">
    <property type="nucleotide sequence ID" value="XM_641035.1"/>
</dbReference>
<dbReference type="SMR" id="Q5TJ57"/>
<dbReference type="FunCoup" id="Q5TJ57">
    <property type="interactions" value="1"/>
</dbReference>
<dbReference type="STRING" id="44689.Q5TJ57"/>
<dbReference type="PaxDb" id="44689-DDB0231181"/>
<dbReference type="EnsemblProtists" id="EAL72163">
    <property type="protein sequence ID" value="EAL72163"/>
    <property type="gene ID" value="DDB_G0269626"/>
</dbReference>
<dbReference type="GeneID" id="8617076"/>
<dbReference type="KEGG" id="ddi:DDB_G0269626"/>
<dbReference type="dictyBase" id="DDB_G0269626">
    <property type="gene designation" value="forE"/>
</dbReference>
<dbReference type="VEuPathDB" id="AmoebaDB:DDB_G0269626"/>
<dbReference type="eggNOG" id="KOG1922">
    <property type="taxonomic scope" value="Eukaryota"/>
</dbReference>
<dbReference type="eggNOG" id="KOG1924">
    <property type="taxonomic scope" value="Eukaryota"/>
</dbReference>
<dbReference type="HOGENOM" id="CLU_245935_0_0_1"/>
<dbReference type="InParanoid" id="Q5TJ57"/>
<dbReference type="OMA" id="IFEMEDM"/>
<dbReference type="PhylomeDB" id="Q5TJ57"/>
<dbReference type="PRO" id="PR:Q5TJ57"/>
<dbReference type="Proteomes" id="UP000002195">
    <property type="component" value="Chromosome 1"/>
</dbReference>
<dbReference type="GO" id="GO:0015629">
    <property type="term" value="C:actin cytoskeleton"/>
    <property type="evidence" value="ECO:0000318"/>
    <property type="project" value="GO_Central"/>
</dbReference>
<dbReference type="GO" id="GO:0005938">
    <property type="term" value="C:cell cortex"/>
    <property type="evidence" value="ECO:0000314"/>
    <property type="project" value="dictyBase"/>
</dbReference>
<dbReference type="GO" id="GO:0031254">
    <property type="term" value="C:cell trailing edge"/>
    <property type="evidence" value="ECO:0000314"/>
    <property type="project" value="dictyBase"/>
</dbReference>
<dbReference type="GO" id="GO:0032433">
    <property type="term" value="C:filopodium tip"/>
    <property type="evidence" value="ECO:0000314"/>
    <property type="project" value="dictyBase"/>
</dbReference>
<dbReference type="GO" id="GO:0051015">
    <property type="term" value="F:actin filament binding"/>
    <property type="evidence" value="ECO:0000318"/>
    <property type="project" value="GO_Central"/>
</dbReference>
<dbReference type="GO" id="GO:0005522">
    <property type="term" value="F:profilin binding"/>
    <property type="evidence" value="ECO:0000250"/>
    <property type="project" value="dictyBase"/>
</dbReference>
<dbReference type="GO" id="GO:0031267">
    <property type="term" value="F:small GTPase binding"/>
    <property type="evidence" value="ECO:0007669"/>
    <property type="project" value="InterPro"/>
</dbReference>
<dbReference type="GO" id="GO:0008270">
    <property type="term" value="F:zinc ion binding"/>
    <property type="evidence" value="ECO:0007669"/>
    <property type="project" value="UniProtKB-KW"/>
</dbReference>
<dbReference type="GO" id="GO:0070060">
    <property type="term" value="P:'de novo' actin filament nucleation"/>
    <property type="evidence" value="ECO:0000314"/>
    <property type="project" value="dictyBase"/>
</dbReference>
<dbReference type="GO" id="GO:0030041">
    <property type="term" value="P:actin filament polymerization"/>
    <property type="evidence" value="ECO:0000318"/>
    <property type="project" value="GO_Central"/>
</dbReference>
<dbReference type="GO" id="GO:0030866">
    <property type="term" value="P:cortical actin cytoskeleton organization"/>
    <property type="evidence" value="ECO:0000316"/>
    <property type="project" value="dictyBase"/>
</dbReference>
<dbReference type="GO" id="GO:0000281">
    <property type="term" value="P:mitotic cytokinesis"/>
    <property type="evidence" value="ECO:0000316"/>
    <property type="project" value="dictyBase"/>
</dbReference>
<dbReference type="GO" id="GO:0030587">
    <property type="term" value="P:sorocarp development"/>
    <property type="evidence" value="ECO:0000316"/>
    <property type="project" value="dictyBase"/>
</dbReference>
<dbReference type="CDD" id="cd00029">
    <property type="entry name" value="C1"/>
    <property type="match status" value="1"/>
</dbReference>
<dbReference type="FunFam" id="1.20.58.2220:FF:000025">
    <property type="entry name" value="Formin-E"/>
    <property type="match status" value="1"/>
</dbReference>
<dbReference type="Gene3D" id="1.20.58.2220">
    <property type="entry name" value="Formin, FH2 domain"/>
    <property type="match status" value="1"/>
</dbReference>
<dbReference type="Gene3D" id="1.10.238.150">
    <property type="entry name" value="Formin, FH3 diaphanous domain"/>
    <property type="match status" value="1"/>
</dbReference>
<dbReference type="Gene3D" id="1.25.10.10">
    <property type="entry name" value="Leucine-rich Repeat Variant"/>
    <property type="match status" value="1"/>
</dbReference>
<dbReference type="InterPro" id="IPR011989">
    <property type="entry name" value="ARM-like"/>
</dbReference>
<dbReference type="InterPro" id="IPR016024">
    <property type="entry name" value="ARM-type_fold"/>
</dbReference>
<dbReference type="InterPro" id="IPR046349">
    <property type="entry name" value="C1-like_sf"/>
</dbReference>
<dbReference type="InterPro" id="IPR015425">
    <property type="entry name" value="FH2_Formin"/>
</dbReference>
<dbReference type="InterPro" id="IPR042201">
    <property type="entry name" value="FH2_Formin_sf"/>
</dbReference>
<dbReference type="InterPro" id="IPR010472">
    <property type="entry name" value="FH3_dom"/>
</dbReference>
<dbReference type="InterPro" id="IPR051425">
    <property type="entry name" value="Formin_Homology"/>
</dbReference>
<dbReference type="InterPro" id="IPR014768">
    <property type="entry name" value="GBD/FH3_dom"/>
</dbReference>
<dbReference type="InterPro" id="IPR010473">
    <property type="entry name" value="GTPase-bd"/>
</dbReference>
<dbReference type="InterPro" id="IPR002219">
    <property type="entry name" value="PE/DAG-bd"/>
</dbReference>
<dbReference type="PANTHER" id="PTHR45725">
    <property type="entry name" value="FORMIN HOMOLOGY 2 FAMILY MEMBER"/>
    <property type="match status" value="1"/>
</dbReference>
<dbReference type="PANTHER" id="PTHR45725:SF19">
    <property type="entry name" value="FORMIN-A-RELATED"/>
    <property type="match status" value="1"/>
</dbReference>
<dbReference type="Pfam" id="PF06367">
    <property type="entry name" value="Drf_FH3"/>
    <property type="match status" value="1"/>
</dbReference>
<dbReference type="Pfam" id="PF06371">
    <property type="entry name" value="Drf_GBD"/>
    <property type="match status" value="1"/>
</dbReference>
<dbReference type="Pfam" id="PF02181">
    <property type="entry name" value="FH2"/>
    <property type="match status" value="1"/>
</dbReference>
<dbReference type="SMART" id="SM00109">
    <property type="entry name" value="C1"/>
    <property type="match status" value="1"/>
</dbReference>
<dbReference type="SMART" id="SM01139">
    <property type="entry name" value="Drf_FH3"/>
    <property type="match status" value="1"/>
</dbReference>
<dbReference type="SMART" id="SM01140">
    <property type="entry name" value="Drf_GBD"/>
    <property type="match status" value="1"/>
</dbReference>
<dbReference type="SMART" id="SM00498">
    <property type="entry name" value="FH2"/>
    <property type="match status" value="1"/>
</dbReference>
<dbReference type="SUPFAM" id="SSF48371">
    <property type="entry name" value="ARM repeat"/>
    <property type="match status" value="1"/>
</dbReference>
<dbReference type="SUPFAM" id="SSF57889">
    <property type="entry name" value="Cysteine-rich domain"/>
    <property type="match status" value="1"/>
</dbReference>
<dbReference type="SUPFAM" id="SSF101447">
    <property type="entry name" value="Formin homology 2 domain (FH2 domain)"/>
    <property type="match status" value="1"/>
</dbReference>
<dbReference type="PROSITE" id="PS51444">
    <property type="entry name" value="FH2"/>
    <property type="match status" value="1"/>
</dbReference>
<dbReference type="PROSITE" id="PS51232">
    <property type="entry name" value="GBD_FH3"/>
    <property type="match status" value="1"/>
</dbReference>
<dbReference type="PROSITE" id="PS50081">
    <property type="entry name" value="ZF_DAG_PE_2"/>
    <property type="match status" value="1"/>
</dbReference>
<organism>
    <name type="scientific">Dictyostelium discoideum</name>
    <name type="common">Social amoeba</name>
    <dbReference type="NCBI Taxonomy" id="44689"/>
    <lineage>
        <taxon>Eukaryota</taxon>
        <taxon>Amoebozoa</taxon>
        <taxon>Evosea</taxon>
        <taxon>Eumycetozoa</taxon>
        <taxon>Dictyostelia</taxon>
        <taxon>Dictyosteliales</taxon>
        <taxon>Dictyosteliaceae</taxon>
        <taxon>Dictyostelium</taxon>
    </lineage>
</organism>
<feature type="chain" id="PRO_0000363917" description="Formin-E">
    <location>
        <begin position="1"/>
        <end position="1561"/>
    </location>
</feature>
<feature type="domain" description="GBD/FH3" evidence="4">
    <location>
        <begin position="581"/>
        <end position="929"/>
    </location>
</feature>
<feature type="domain" description="FH1">
    <location>
        <begin position="1019"/>
        <end position="1081"/>
    </location>
</feature>
<feature type="domain" description="FH2" evidence="5">
    <location>
        <begin position="1086"/>
        <end position="1475"/>
    </location>
</feature>
<feature type="domain" description="DAD">
    <location>
        <begin position="1488"/>
        <end position="1518"/>
    </location>
</feature>
<feature type="zinc finger region" description="Phorbol-ester/DAG-type" evidence="3">
    <location>
        <begin position="379"/>
        <end position="427"/>
    </location>
</feature>
<feature type="region of interest" description="Disordered" evidence="6">
    <location>
        <begin position="1"/>
        <end position="63"/>
    </location>
</feature>
<feature type="region of interest" description="Disordered" evidence="6">
    <location>
        <begin position="77"/>
        <end position="187"/>
    </location>
</feature>
<feature type="region of interest" description="Disordered" evidence="6">
    <location>
        <begin position="211"/>
        <end position="279"/>
    </location>
</feature>
<feature type="region of interest" description="Disordered" evidence="6">
    <location>
        <begin position="305"/>
        <end position="365"/>
    </location>
</feature>
<feature type="region of interest" description="Disordered" evidence="6">
    <location>
        <begin position="465"/>
        <end position="549"/>
    </location>
</feature>
<feature type="region of interest" description="Disordered" evidence="6">
    <location>
        <begin position="1009"/>
        <end position="1092"/>
    </location>
</feature>
<feature type="region of interest" description="Disordered" evidence="6">
    <location>
        <begin position="1466"/>
        <end position="1508"/>
    </location>
</feature>
<feature type="region of interest" description="Disordered" evidence="6">
    <location>
        <begin position="1526"/>
        <end position="1561"/>
    </location>
</feature>
<feature type="coiled-coil region" evidence="2">
    <location>
        <begin position="32"/>
        <end position="85"/>
    </location>
</feature>
<feature type="coiled-coil region" evidence="2">
    <location>
        <begin position="158"/>
        <end position="208"/>
    </location>
</feature>
<feature type="coiled-coil region" evidence="2">
    <location>
        <begin position="541"/>
        <end position="573"/>
    </location>
</feature>
<feature type="coiled-coil region" evidence="2">
    <location>
        <begin position="952"/>
        <end position="989"/>
    </location>
</feature>
<feature type="coiled-coil region" evidence="2">
    <location>
        <begin position="1398"/>
        <end position="1491"/>
    </location>
</feature>
<feature type="compositionally biased region" description="Low complexity" evidence="6">
    <location>
        <begin position="1"/>
        <end position="28"/>
    </location>
</feature>
<feature type="compositionally biased region" description="Basic and acidic residues" evidence="6">
    <location>
        <begin position="29"/>
        <end position="51"/>
    </location>
</feature>
<feature type="compositionally biased region" description="Acidic residues" evidence="6">
    <location>
        <begin position="80"/>
        <end position="89"/>
    </location>
</feature>
<feature type="compositionally biased region" description="Polar residues" evidence="6">
    <location>
        <begin position="103"/>
        <end position="120"/>
    </location>
</feature>
<feature type="compositionally biased region" description="Basic and acidic residues" evidence="6">
    <location>
        <begin position="162"/>
        <end position="187"/>
    </location>
</feature>
<feature type="compositionally biased region" description="Pro residues" evidence="6">
    <location>
        <begin position="220"/>
        <end position="229"/>
    </location>
</feature>
<feature type="compositionally biased region" description="Low complexity" evidence="6">
    <location>
        <begin position="230"/>
        <end position="258"/>
    </location>
</feature>
<feature type="compositionally biased region" description="Polar residues" evidence="6">
    <location>
        <begin position="305"/>
        <end position="320"/>
    </location>
</feature>
<feature type="compositionally biased region" description="Low complexity" evidence="6">
    <location>
        <begin position="326"/>
        <end position="365"/>
    </location>
</feature>
<feature type="compositionally biased region" description="Low complexity" evidence="6">
    <location>
        <begin position="465"/>
        <end position="534"/>
    </location>
</feature>
<feature type="compositionally biased region" description="Low complexity" evidence="6">
    <location>
        <begin position="1017"/>
        <end position="1033"/>
    </location>
</feature>
<feature type="compositionally biased region" description="Pro residues" evidence="6">
    <location>
        <begin position="1034"/>
        <end position="1070"/>
    </location>
</feature>
<feature type="compositionally biased region" description="Low complexity" evidence="6">
    <location>
        <begin position="1071"/>
        <end position="1081"/>
    </location>
</feature>
<feature type="compositionally biased region" description="Basic and acidic residues" evidence="6">
    <location>
        <begin position="1466"/>
        <end position="1481"/>
    </location>
</feature>
<feature type="compositionally biased region" description="Polar residues" evidence="6">
    <location>
        <begin position="1484"/>
        <end position="1498"/>
    </location>
</feature>
<feature type="compositionally biased region" description="Polar residues" evidence="6">
    <location>
        <begin position="1536"/>
        <end position="1561"/>
    </location>
</feature>
<name>FORE_DICDI</name>